<reference evidence="5" key="1">
    <citation type="journal article" date="2010" name="Mol. Biol. Evol.">
        <title>Parallel evolution of nacre building gene sets in molluscs.</title>
        <authorList>
            <person name="Jackson D.J."/>
            <person name="McDougall C."/>
            <person name="Woodcroft B."/>
            <person name="Moase P."/>
            <person name="Rose R.A."/>
            <person name="Kube M."/>
            <person name="Reinhardt R."/>
            <person name="Rokhsar D.S."/>
            <person name="Montagnani C."/>
            <person name="Joubert C."/>
            <person name="Piquemal D."/>
            <person name="Degnan B.M."/>
        </authorList>
    </citation>
    <scope>NUCLEOTIDE SEQUENCE [MRNA]</scope>
    <scope>IDENTIFICATION</scope>
    <source>
        <tissue evidence="3">Mantle</tissue>
    </source>
</reference>
<reference key="2">
    <citation type="journal article" date="2012" name="Proc. Natl. Acad. Sci. U.S.A.">
        <title>Different secretory repertoires control the biomineralization processes of prism and nacre deposition of the pearl oyster shell.</title>
        <authorList>
            <person name="Marie B."/>
            <person name="Joubert C."/>
            <person name="Tayale A."/>
            <person name="Zanella-Cleon I."/>
            <person name="Belliard C."/>
            <person name="Piquemal D."/>
            <person name="Cochennec-Laureau N."/>
            <person name="Marin F."/>
            <person name="Gueguen Y."/>
            <person name="Montagnani C."/>
        </authorList>
    </citation>
    <scope>PROTEIN SEQUENCE OF 67-76 AND 88-95</scope>
    <scope>SUBCELLULAR LOCATION</scope>
    <scope>TISSUE SPECIFICITY</scope>
    <source>
        <tissue>Shell</tissue>
    </source>
</reference>
<organism>
    <name type="scientific">Pinctada maxima</name>
    <name type="common">Silver-lipped pearl oyster</name>
    <name type="synonym">White-lipped pearl oyster</name>
    <dbReference type="NCBI Taxonomy" id="104660"/>
    <lineage>
        <taxon>Eukaryota</taxon>
        <taxon>Metazoa</taxon>
        <taxon>Spiralia</taxon>
        <taxon>Lophotrochozoa</taxon>
        <taxon>Mollusca</taxon>
        <taxon>Bivalvia</taxon>
        <taxon>Autobranchia</taxon>
        <taxon>Pteriomorphia</taxon>
        <taxon>Pterioida</taxon>
        <taxon>Pterioidea</taxon>
        <taxon>Pteriidae</taxon>
        <taxon>Pinctada</taxon>
    </lineage>
</organism>
<name>KCP1_PINMA</name>
<protein>
    <recommendedName>
        <fullName>BPTI/Kunitz domain-containing protein 1</fullName>
    </recommendedName>
    <alternativeName>
        <fullName>Prism serine protease inhibitor 1</fullName>
        <shortName>PSPI1</shortName>
    </alternativeName>
</protein>
<keyword id="KW-0903">Direct protein sequencing</keyword>
<keyword id="KW-1015">Disulfide bond</keyword>
<keyword id="KW-0646">Protease inhibitor</keyword>
<keyword id="KW-0964">Secreted</keyword>
<keyword id="KW-0722">Serine protease inhibitor</keyword>
<keyword id="KW-0732">Signal</keyword>
<evidence type="ECO:0000255" key="1"/>
<evidence type="ECO:0000255" key="2">
    <source>
        <dbReference type="PROSITE-ProRule" id="PRU00031"/>
    </source>
</evidence>
<evidence type="ECO:0000269" key="3">
    <source>
    </source>
</evidence>
<evidence type="ECO:0000269" key="4">
    <source>
    </source>
</evidence>
<evidence type="ECO:0000305" key="5"/>
<feature type="signal peptide" evidence="1">
    <location>
        <begin position="1"/>
        <end position="19"/>
    </location>
</feature>
<feature type="chain" id="PRO_0000413075" description="BPTI/Kunitz domain-containing protein 1" evidence="1">
    <location>
        <begin position="20"/>
        <end position="138"/>
    </location>
</feature>
<feature type="domain" description="BPTI/Kunitz inhibitor" evidence="2">
    <location>
        <begin position="72"/>
        <end position="122"/>
    </location>
</feature>
<feature type="disulfide bond" evidence="2">
    <location>
        <begin position="72"/>
        <end position="122"/>
    </location>
</feature>
<feature type="disulfide bond" evidence="2">
    <location>
        <begin position="81"/>
        <end position="105"/>
    </location>
</feature>
<feature type="disulfide bond" evidence="2">
    <location>
        <begin position="97"/>
        <end position="118"/>
    </location>
</feature>
<comment type="subcellular location">
    <subcellularLocation>
        <location evidence="4">Secreted</location>
    </subcellularLocation>
</comment>
<comment type="tissue specificity">
    <text evidence="4">Prismatic layer of shell (at protein level). Expressed primarily in the mantle with highest level in the mantle edge and lower level in the mantle pallium.</text>
</comment>
<accession>P86959</accession>
<proteinExistence type="evidence at protein level"/>
<sequence length="138" mass="16200">MYTLYILSLLCAFVTFSECKYPPGPIYPHRPIYPIQPVYPDHCPGVCYIACPNGNIHDRNGCPICRCRPDECTLPRKIGPCRASIPRYYFNFVTKRCELFFWGGCQPNKNNFETIYDCQGYCGYAERRYPYPYVKRTY</sequence>
<dbReference type="EMBL" id="GT282225">
    <property type="status" value="NOT_ANNOTATED_CDS"/>
    <property type="molecule type" value="mRNA"/>
</dbReference>
<dbReference type="EMBL" id="GT282425">
    <property type="status" value="NOT_ANNOTATED_CDS"/>
    <property type="molecule type" value="mRNA"/>
</dbReference>
<dbReference type="EMBL" id="EZ420477">
    <property type="status" value="NOT_ANNOTATED_CDS"/>
    <property type="molecule type" value="mRNA"/>
</dbReference>
<dbReference type="SMR" id="P86959"/>
<dbReference type="GO" id="GO:0005615">
    <property type="term" value="C:extracellular space"/>
    <property type="evidence" value="ECO:0007669"/>
    <property type="project" value="TreeGrafter"/>
</dbReference>
<dbReference type="GO" id="GO:0004867">
    <property type="term" value="F:serine-type endopeptidase inhibitor activity"/>
    <property type="evidence" value="ECO:0007669"/>
    <property type="project" value="UniProtKB-KW"/>
</dbReference>
<dbReference type="CDD" id="cd00109">
    <property type="entry name" value="Kunitz-type"/>
    <property type="match status" value="1"/>
</dbReference>
<dbReference type="Gene3D" id="2.10.22.10">
    <property type="entry name" value="Antistasin, domain 1"/>
    <property type="match status" value="1"/>
</dbReference>
<dbReference type="Gene3D" id="4.10.410.10">
    <property type="entry name" value="Pancreatic trypsin inhibitor Kunitz domain"/>
    <property type="match status" value="1"/>
</dbReference>
<dbReference type="InterPro" id="IPR004094">
    <property type="entry name" value="Antistasin-like"/>
</dbReference>
<dbReference type="InterPro" id="IPR011061">
    <property type="entry name" value="Hirudin/antistatin"/>
</dbReference>
<dbReference type="InterPro" id="IPR002223">
    <property type="entry name" value="Kunitz_BPTI"/>
</dbReference>
<dbReference type="InterPro" id="IPR036880">
    <property type="entry name" value="Kunitz_BPTI_sf"/>
</dbReference>
<dbReference type="InterPro" id="IPR020901">
    <property type="entry name" value="Prtase_inh_Kunz-CS"/>
</dbReference>
<dbReference type="InterPro" id="IPR050098">
    <property type="entry name" value="TFPI/VKTCI-like"/>
</dbReference>
<dbReference type="PANTHER" id="PTHR10083:SF374">
    <property type="entry name" value="BPTI_KUNITZ INHIBITOR DOMAIN-CONTAINING PROTEIN"/>
    <property type="match status" value="1"/>
</dbReference>
<dbReference type="PANTHER" id="PTHR10083">
    <property type="entry name" value="KUNITZ-TYPE PROTEASE INHIBITOR-RELATED"/>
    <property type="match status" value="1"/>
</dbReference>
<dbReference type="Pfam" id="PF02822">
    <property type="entry name" value="Antistasin"/>
    <property type="match status" value="1"/>
</dbReference>
<dbReference type="Pfam" id="PF00014">
    <property type="entry name" value="Kunitz_BPTI"/>
    <property type="match status" value="1"/>
</dbReference>
<dbReference type="PRINTS" id="PR00759">
    <property type="entry name" value="BASICPTASE"/>
</dbReference>
<dbReference type="SMART" id="SM00131">
    <property type="entry name" value="KU"/>
    <property type="match status" value="1"/>
</dbReference>
<dbReference type="SUPFAM" id="SSF57362">
    <property type="entry name" value="BPTI-like"/>
    <property type="match status" value="1"/>
</dbReference>
<dbReference type="SUPFAM" id="SSF57262">
    <property type="entry name" value="Leech antihemostatic proteins"/>
    <property type="match status" value="1"/>
</dbReference>
<dbReference type="PROSITE" id="PS00280">
    <property type="entry name" value="BPTI_KUNITZ_1"/>
    <property type="match status" value="1"/>
</dbReference>
<dbReference type="PROSITE" id="PS50279">
    <property type="entry name" value="BPTI_KUNITZ_2"/>
    <property type="match status" value="1"/>
</dbReference>